<proteinExistence type="inferred from homology"/>
<protein>
    <recommendedName>
        <fullName evidence="1">Eukaryotic translation initiation factor 3 subunit J</fullName>
        <shortName evidence="1">eIF3j</shortName>
    </recommendedName>
    <alternativeName>
        <fullName>Eukaryotic translation initiation factor 3 30 kDa subunit</fullName>
        <shortName>eIF-3 30 kDa</shortName>
    </alternativeName>
</protein>
<dbReference type="EMBL" id="BA000050">
    <property type="protein sequence ID" value="BAE57290.1"/>
    <property type="molecule type" value="Genomic_DNA"/>
</dbReference>
<dbReference type="RefSeq" id="XP_001819292.1">
    <property type="nucleotide sequence ID" value="XM_001819240.2"/>
</dbReference>
<dbReference type="SMR" id="Q2UMC5"/>
<dbReference type="STRING" id="510516.Q2UMC5"/>
<dbReference type="EnsemblFungi" id="BAE57290">
    <property type="protein sequence ID" value="BAE57290"/>
    <property type="gene ID" value="AO090003000054"/>
</dbReference>
<dbReference type="GeneID" id="5991275"/>
<dbReference type="KEGG" id="aor:AO090003000054"/>
<dbReference type="VEuPathDB" id="FungiDB:AO090003000054"/>
<dbReference type="HOGENOM" id="CLU_087988_0_0_1"/>
<dbReference type="OMA" id="KPHYALW"/>
<dbReference type="OrthoDB" id="129213at5052"/>
<dbReference type="Proteomes" id="UP000006564">
    <property type="component" value="Chromosome 2"/>
</dbReference>
<dbReference type="GO" id="GO:0016282">
    <property type="term" value="C:eukaryotic 43S preinitiation complex"/>
    <property type="evidence" value="ECO:0007669"/>
    <property type="project" value="UniProtKB-UniRule"/>
</dbReference>
<dbReference type="GO" id="GO:0033290">
    <property type="term" value="C:eukaryotic 48S preinitiation complex"/>
    <property type="evidence" value="ECO:0007669"/>
    <property type="project" value="UniProtKB-UniRule"/>
</dbReference>
<dbReference type="GO" id="GO:0005852">
    <property type="term" value="C:eukaryotic translation initiation factor 3 complex"/>
    <property type="evidence" value="ECO:0007669"/>
    <property type="project" value="UniProtKB-UniRule"/>
</dbReference>
<dbReference type="GO" id="GO:0003743">
    <property type="term" value="F:translation initiation factor activity"/>
    <property type="evidence" value="ECO:0007669"/>
    <property type="project" value="UniProtKB-UniRule"/>
</dbReference>
<dbReference type="GO" id="GO:0001732">
    <property type="term" value="P:formation of cytoplasmic translation initiation complex"/>
    <property type="evidence" value="ECO:0007669"/>
    <property type="project" value="UniProtKB-UniRule"/>
</dbReference>
<dbReference type="FunFam" id="1.10.246.60:FF:000003">
    <property type="entry name" value="Eukaryotic translation initiation factor 3 subunit J"/>
    <property type="match status" value="1"/>
</dbReference>
<dbReference type="Gene3D" id="1.10.246.60">
    <property type="entry name" value="Eukaryotic translation initiation factor 3 like domains"/>
    <property type="match status" value="1"/>
</dbReference>
<dbReference type="HAMAP" id="MF_03009">
    <property type="entry name" value="eIF3j"/>
    <property type="match status" value="1"/>
</dbReference>
<dbReference type="InterPro" id="IPR023194">
    <property type="entry name" value="eIF3-like_dom_sf"/>
</dbReference>
<dbReference type="InterPro" id="IPR013906">
    <property type="entry name" value="eIF3j"/>
</dbReference>
<dbReference type="PANTHER" id="PTHR21681">
    <property type="entry name" value="EUKARYOTIC TRANSLATION INITIATION FACTOR 3 SUBUNIT J"/>
    <property type="match status" value="1"/>
</dbReference>
<dbReference type="PANTHER" id="PTHR21681:SF0">
    <property type="entry name" value="EUKARYOTIC TRANSLATION INITIATION FACTOR 3 SUBUNIT J"/>
    <property type="match status" value="1"/>
</dbReference>
<dbReference type="Pfam" id="PF08597">
    <property type="entry name" value="eIF3_subunit"/>
    <property type="match status" value="1"/>
</dbReference>
<accession>Q2UMC5</accession>
<organism>
    <name type="scientific">Aspergillus oryzae (strain ATCC 42149 / RIB 40)</name>
    <name type="common">Yellow koji mold</name>
    <dbReference type="NCBI Taxonomy" id="510516"/>
    <lineage>
        <taxon>Eukaryota</taxon>
        <taxon>Fungi</taxon>
        <taxon>Dikarya</taxon>
        <taxon>Ascomycota</taxon>
        <taxon>Pezizomycotina</taxon>
        <taxon>Eurotiomycetes</taxon>
        <taxon>Eurotiomycetidae</taxon>
        <taxon>Eurotiales</taxon>
        <taxon>Aspergillaceae</taxon>
        <taxon>Aspergillus</taxon>
        <taxon>Aspergillus subgen. Circumdati</taxon>
    </lineage>
</organism>
<keyword id="KW-0175">Coiled coil</keyword>
<keyword id="KW-0963">Cytoplasm</keyword>
<keyword id="KW-0396">Initiation factor</keyword>
<keyword id="KW-0648">Protein biosynthesis</keyword>
<keyword id="KW-1185">Reference proteome</keyword>
<sequence>MAPERWDDEEDSVSPPPVAPRRRFDDEEEDEVLDSWDAAEDSEVEREKAAKAAEAKAKADAEAAAKKKSKSQRIQEHKEERKKKAEEEDSDSEEEDDADKRARLRRAQKDADLKHAEDLFGDIDLNRNRGAPKAIVISDSADPTQAVDLSAMPLFKPTTKEQFARLTSTLIPLLTPHSKKPHYSLWAQEFAKQLVKELNSADVKKIASAMTTMSNEKMREERAADKGSKKSKAAKTKVSLVTSRDNKLDADYDNGDDGLGDDDFM</sequence>
<evidence type="ECO:0000255" key="1">
    <source>
        <dbReference type="HAMAP-Rule" id="MF_03009"/>
    </source>
</evidence>
<evidence type="ECO:0000256" key="2">
    <source>
        <dbReference type="SAM" id="MobiDB-lite"/>
    </source>
</evidence>
<gene>
    <name type="primary">hcr1</name>
    <name type="ORF">AO090003000054</name>
</gene>
<comment type="function">
    <text evidence="1">Component of the eukaryotic translation initiation factor 3 (eIF-3) complex, which is involved in protein synthesis of a specialized repertoire of mRNAs and, together with other initiation factors, stimulates binding of mRNA and methionyl-tRNAi to the 40S ribosome. The eIF-3 complex specifically targets and initiates translation of a subset of mRNAs involved in cell proliferation.</text>
</comment>
<comment type="subunit">
    <text evidence="1">Component of the eukaryotic translation initiation factor 3 (eIF-3) complex.</text>
</comment>
<comment type="subcellular location">
    <subcellularLocation>
        <location evidence="1">Cytoplasm</location>
    </subcellularLocation>
</comment>
<comment type="similarity">
    <text evidence="1">Belongs to the eIF-3 subunit J family.</text>
</comment>
<feature type="chain" id="PRO_0000365149" description="Eukaryotic translation initiation factor 3 subunit J">
    <location>
        <begin position="1"/>
        <end position="265"/>
    </location>
</feature>
<feature type="region of interest" description="Disordered" evidence="2">
    <location>
        <begin position="1"/>
        <end position="113"/>
    </location>
</feature>
<feature type="region of interest" description="Disordered" evidence="2">
    <location>
        <begin position="212"/>
        <end position="265"/>
    </location>
</feature>
<feature type="coiled-coil region" evidence="1">
    <location>
        <begin position="61"/>
        <end position="95"/>
    </location>
</feature>
<feature type="compositionally biased region" description="Acidic residues" evidence="2">
    <location>
        <begin position="1"/>
        <end position="12"/>
    </location>
</feature>
<feature type="compositionally biased region" description="Acidic residues" evidence="2">
    <location>
        <begin position="26"/>
        <end position="44"/>
    </location>
</feature>
<feature type="compositionally biased region" description="Basic and acidic residues" evidence="2">
    <location>
        <begin position="45"/>
        <end position="65"/>
    </location>
</feature>
<feature type="compositionally biased region" description="Basic and acidic residues" evidence="2">
    <location>
        <begin position="73"/>
        <end position="86"/>
    </location>
</feature>
<feature type="compositionally biased region" description="Acidic residues" evidence="2">
    <location>
        <begin position="87"/>
        <end position="97"/>
    </location>
</feature>
<feature type="compositionally biased region" description="Basic and acidic residues" evidence="2">
    <location>
        <begin position="216"/>
        <end position="228"/>
    </location>
</feature>
<feature type="compositionally biased region" description="Acidic residues" evidence="2">
    <location>
        <begin position="251"/>
        <end position="265"/>
    </location>
</feature>
<reference key="1">
    <citation type="journal article" date="2005" name="Nature">
        <title>Genome sequencing and analysis of Aspergillus oryzae.</title>
        <authorList>
            <person name="Machida M."/>
            <person name="Asai K."/>
            <person name="Sano M."/>
            <person name="Tanaka T."/>
            <person name="Kumagai T."/>
            <person name="Terai G."/>
            <person name="Kusumoto K."/>
            <person name="Arima T."/>
            <person name="Akita O."/>
            <person name="Kashiwagi Y."/>
            <person name="Abe K."/>
            <person name="Gomi K."/>
            <person name="Horiuchi H."/>
            <person name="Kitamoto K."/>
            <person name="Kobayashi T."/>
            <person name="Takeuchi M."/>
            <person name="Denning D.W."/>
            <person name="Galagan J.E."/>
            <person name="Nierman W.C."/>
            <person name="Yu J."/>
            <person name="Archer D.B."/>
            <person name="Bennett J.W."/>
            <person name="Bhatnagar D."/>
            <person name="Cleveland T.E."/>
            <person name="Fedorova N.D."/>
            <person name="Gotoh O."/>
            <person name="Horikawa H."/>
            <person name="Hosoyama A."/>
            <person name="Ichinomiya M."/>
            <person name="Igarashi R."/>
            <person name="Iwashita K."/>
            <person name="Juvvadi P.R."/>
            <person name="Kato M."/>
            <person name="Kato Y."/>
            <person name="Kin T."/>
            <person name="Kokubun A."/>
            <person name="Maeda H."/>
            <person name="Maeyama N."/>
            <person name="Maruyama J."/>
            <person name="Nagasaki H."/>
            <person name="Nakajima T."/>
            <person name="Oda K."/>
            <person name="Okada K."/>
            <person name="Paulsen I."/>
            <person name="Sakamoto K."/>
            <person name="Sawano T."/>
            <person name="Takahashi M."/>
            <person name="Takase K."/>
            <person name="Terabayashi Y."/>
            <person name="Wortman J.R."/>
            <person name="Yamada O."/>
            <person name="Yamagata Y."/>
            <person name="Anazawa H."/>
            <person name="Hata Y."/>
            <person name="Koide Y."/>
            <person name="Komori T."/>
            <person name="Koyama Y."/>
            <person name="Minetoki T."/>
            <person name="Suharnan S."/>
            <person name="Tanaka A."/>
            <person name="Isono K."/>
            <person name="Kuhara S."/>
            <person name="Ogasawara N."/>
            <person name="Kikuchi H."/>
        </authorList>
    </citation>
    <scope>NUCLEOTIDE SEQUENCE [LARGE SCALE GENOMIC DNA]</scope>
    <source>
        <strain>ATCC 42149 / RIB 40</strain>
    </source>
</reference>
<name>EIF3J_ASPOR</name>